<accession>Q00189</accession>
<sequence>MSEPKDQSIEDELDAALAALDSGPLPTSTLPEPQPSPEQATAGQPPAEATAPTPAFTPPPSTGSPTLDALEENRRPKASTVCEHCPNSVWFASPAEVKCYCRVMFLVTWSSKEPNQITHCDGEFLGQEQE</sequence>
<geneLocation type="plasmid">
    <name>IncP-beta R751</name>
</geneLocation>
<keyword id="KW-0184">Conjugation</keyword>
<keyword id="KW-0614">Plasmid</keyword>
<reference key="1">
    <citation type="journal article" date="1991" name="DNA Seq.">
        <title>Nucleotide sequence and organization of genes flanking the transfer origin of promiscuous plasmid RP4.</title>
        <authorList>
            <person name="Ziegelin G."/>
            <person name="Pansegrau W."/>
            <person name="Strack B."/>
            <person name="Balzer D."/>
            <person name="Kroeger M."/>
            <person name="Kruft V."/>
            <person name="Lanka E."/>
        </authorList>
    </citation>
    <scope>NUCLEOTIDE SEQUENCE [GENOMIC DNA]</scope>
    <source>
        <strain>ATCC 33694 / HB101</strain>
    </source>
</reference>
<reference key="2">
    <citation type="submission" date="1996-08" db="EMBL/GenBank/DDBJ databases">
        <authorList>
            <person name="Thomas C.M."/>
        </authorList>
    </citation>
    <scope>NUCLEOTIDE SEQUENCE [GENOMIC DNA]</scope>
</reference>
<dbReference type="EMBL" id="X54458">
    <property type="protein sequence ID" value="CAA38328.1"/>
    <property type="molecule type" value="Genomic_DNA"/>
</dbReference>
<dbReference type="EMBL" id="U67194">
    <property type="protein sequence ID" value="AAC64476.1"/>
    <property type="molecule type" value="Genomic_DNA"/>
</dbReference>
<dbReference type="PIR" id="S22993">
    <property type="entry name" value="S22993"/>
</dbReference>
<organism>
    <name type="scientific">Escherichia coli</name>
    <dbReference type="NCBI Taxonomy" id="562"/>
    <lineage>
        <taxon>Bacteria</taxon>
        <taxon>Pseudomonadati</taxon>
        <taxon>Pseudomonadota</taxon>
        <taxon>Gammaproteobacteria</taxon>
        <taxon>Enterobacterales</taxon>
        <taxon>Enterobacteriaceae</taxon>
        <taxon>Escherichia</taxon>
    </lineage>
</organism>
<feature type="chain" id="PRO_0000068597" description="Protein TraH">
    <location>
        <begin position="1"/>
        <end position="130"/>
    </location>
</feature>
<feature type="region of interest" description="Disordered" evidence="1">
    <location>
        <begin position="1"/>
        <end position="78"/>
    </location>
</feature>
<feature type="compositionally biased region" description="Low complexity" evidence="1">
    <location>
        <begin position="37"/>
        <end position="54"/>
    </location>
</feature>
<name>TRAH5_ECOLX</name>
<gene>
    <name type="primary">traH</name>
</gene>
<evidence type="ECO:0000256" key="1">
    <source>
        <dbReference type="SAM" id="MobiDB-lite"/>
    </source>
</evidence>
<protein>
    <recommendedName>
        <fullName>Protein TraH</fullName>
    </recommendedName>
</protein>
<proteinExistence type="predicted"/>
<comment type="function">
    <text>The initiation process of transfer DNA synthesis requires the interaction of at least three plasmid-specific components (TraH, TraI, and TraJ) at the transfer origin resulting in the assembly of a specialized nucleoprotein complex - the relaxosome.</text>
</comment>